<gene>
    <name evidence="1" type="primary">rps4e</name>
    <name type="ordered locus">UNCMA_06390</name>
    <name type="ORF">RCIX2557</name>
</gene>
<name>RS4E_METAR</name>
<feature type="chain" id="PRO_1000081350" description="Small ribosomal subunit protein eS4">
    <location>
        <begin position="1"/>
        <end position="234"/>
    </location>
</feature>
<feature type="domain" description="S4 RNA-binding" evidence="1">
    <location>
        <begin position="39"/>
        <end position="102"/>
    </location>
</feature>
<accession>Q0W1X6</accession>
<keyword id="KW-1185">Reference proteome</keyword>
<keyword id="KW-0687">Ribonucleoprotein</keyword>
<keyword id="KW-0689">Ribosomal protein</keyword>
<keyword id="KW-0694">RNA-binding</keyword>
<keyword id="KW-0699">rRNA-binding</keyword>
<reference key="1">
    <citation type="journal article" date="2006" name="Science">
        <title>Genome of rice cluster I archaea -- the key methane producers in the rice rhizosphere.</title>
        <authorList>
            <person name="Erkel C."/>
            <person name="Kube M."/>
            <person name="Reinhardt R."/>
            <person name="Liesack W."/>
        </authorList>
    </citation>
    <scope>NUCLEOTIDE SEQUENCE [LARGE SCALE GENOMIC DNA]</scope>
    <source>
        <strain>DSM 22066 / NBRC 105507 / MRE50</strain>
    </source>
</reference>
<protein>
    <recommendedName>
        <fullName evidence="1">Small ribosomal subunit protein eS4</fullName>
    </recommendedName>
    <alternativeName>
        <fullName evidence="2">30S ribosomal protein S4e</fullName>
    </alternativeName>
</protein>
<evidence type="ECO:0000255" key="1">
    <source>
        <dbReference type="HAMAP-Rule" id="MF_00485"/>
    </source>
</evidence>
<evidence type="ECO:0000305" key="2"/>
<organism>
    <name type="scientific">Methanocella arvoryzae (strain DSM 22066 / NBRC 105507 / MRE50)</name>
    <dbReference type="NCBI Taxonomy" id="351160"/>
    <lineage>
        <taxon>Archaea</taxon>
        <taxon>Methanobacteriati</taxon>
        <taxon>Methanobacteriota</taxon>
        <taxon>Stenosarchaea group</taxon>
        <taxon>Methanomicrobia</taxon>
        <taxon>Methanocellales</taxon>
        <taxon>Methanocellaceae</taxon>
        <taxon>Methanocella</taxon>
    </lineage>
</organism>
<dbReference type="EMBL" id="AM114193">
    <property type="protein sequence ID" value="CAJ37617.1"/>
    <property type="molecule type" value="Genomic_DNA"/>
</dbReference>
<dbReference type="RefSeq" id="WP_012034968.1">
    <property type="nucleotide sequence ID" value="NC_009464.1"/>
</dbReference>
<dbReference type="SMR" id="Q0W1X6"/>
<dbReference type="STRING" id="351160.RCIX2557"/>
<dbReference type="GeneID" id="5144737"/>
<dbReference type="KEGG" id="rci:RCIX2557"/>
<dbReference type="PATRIC" id="fig|351160.9.peg.666"/>
<dbReference type="eggNOG" id="arCOG04093">
    <property type="taxonomic scope" value="Archaea"/>
</dbReference>
<dbReference type="OrthoDB" id="372073at2157"/>
<dbReference type="Proteomes" id="UP000000663">
    <property type="component" value="Chromosome"/>
</dbReference>
<dbReference type="GO" id="GO:0022627">
    <property type="term" value="C:cytosolic small ribosomal subunit"/>
    <property type="evidence" value="ECO:0007669"/>
    <property type="project" value="TreeGrafter"/>
</dbReference>
<dbReference type="GO" id="GO:0019843">
    <property type="term" value="F:rRNA binding"/>
    <property type="evidence" value="ECO:0007669"/>
    <property type="project" value="UniProtKB-KW"/>
</dbReference>
<dbReference type="GO" id="GO:0003735">
    <property type="term" value="F:structural constituent of ribosome"/>
    <property type="evidence" value="ECO:0007669"/>
    <property type="project" value="InterPro"/>
</dbReference>
<dbReference type="GO" id="GO:0006412">
    <property type="term" value="P:translation"/>
    <property type="evidence" value="ECO:0007669"/>
    <property type="project" value="UniProtKB-UniRule"/>
</dbReference>
<dbReference type="CDD" id="cd06087">
    <property type="entry name" value="KOW_RPS4"/>
    <property type="match status" value="1"/>
</dbReference>
<dbReference type="CDD" id="cd00165">
    <property type="entry name" value="S4"/>
    <property type="match status" value="1"/>
</dbReference>
<dbReference type="FunFam" id="3.10.290.10:FF:000002">
    <property type="entry name" value="40S ribosomal protein S4"/>
    <property type="match status" value="1"/>
</dbReference>
<dbReference type="Gene3D" id="2.30.30.30">
    <property type="match status" value="1"/>
</dbReference>
<dbReference type="Gene3D" id="2.40.50.740">
    <property type="match status" value="1"/>
</dbReference>
<dbReference type="Gene3D" id="3.10.290.10">
    <property type="entry name" value="RNA-binding S4 domain"/>
    <property type="match status" value="1"/>
</dbReference>
<dbReference type="HAMAP" id="MF_00485">
    <property type="entry name" value="Ribosomal_eS4"/>
    <property type="match status" value="1"/>
</dbReference>
<dbReference type="InterPro" id="IPR005824">
    <property type="entry name" value="KOW"/>
</dbReference>
<dbReference type="InterPro" id="IPR014722">
    <property type="entry name" value="Rib_uL2_dom2"/>
</dbReference>
<dbReference type="InterPro" id="IPR000876">
    <property type="entry name" value="Ribosomal_eS4"/>
</dbReference>
<dbReference type="InterPro" id="IPR013845">
    <property type="entry name" value="Ribosomal_eS4_central_region"/>
</dbReference>
<dbReference type="InterPro" id="IPR038237">
    <property type="entry name" value="Ribosomal_eS4_central_sf"/>
</dbReference>
<dbReference type="InterPro" id="IPR041982">
    <property type="entry name" value="Ribosomal_eS4_KOW"/>
</dbReference>
<dbReference type="InterPro" id="IPR013843">
    <property type="entry name" value="Ribosomal_eS4_N"/>
</dbReference>
<dbReference type="InterPro" id="IPR018199">
    <property type="entry name" value="Ribosomal_eS4_N_CS"/>
</dbReference>
<dbReference type="InterPro" id="IPR002942">
    <property type="entry name" value="S4_RNA-bd"/>
</dbReference>
<dbReference type="InterPro" id="IPR036986">
    <property type="entry name" value="S4_RNA-bd_sf"/>
</dbReference>
<dbReference type="NCBIfam" id="NF003312">
    <property type="entry name" value="PRK04313.1"/>
    <property type="match status" value="1"/>
</dbReference>
<dbReference type="PANTHER" id="PTHR11581">
    <property type="entry name" value="30S/40S RIBOSOMAL PROTEIN S4"/>
    <property type="match status" value="1"/>
</dbReference>
<dbReference type="PANTHER" id="PTHR11581:SF0">
    <property type="entry name" value="SMALL RIBOSOMAL SUBUNIT PROTEIN ES4"/>
    <property type="match status" value="1"/>
</dbReference>
<dbReference type="Pfam" id="PF00467">
    <property type="entry name" value="KOW"/>
    <property type="match status" value="1"/>
</dbReference>
<dbReference type="Pfam" id="PF00900">
    <property type="entry name" value="Ribosomal_S4e"/>
    <property type="match status" value="1"/>
</dbReference>
<dbReference type="Pfam" id="PF08071">
    <property type="entry name" value="RS4NT"/>
    <property type="match status" value="1"/>
</dbReference>
<dbReference type="Pfam" id="PF01479">
    <property type="entry name" value="S4"/>
    <property type="match status" value="1"/>
</dbReference>
<dbReference type="PIRSF" id="PIRSF002116">
    <property type="entry name" value="Ribosomal_S4"/>
    <property type="match status" value="1"/>
</dbReference>
<dbReference type="SMART" id="SM00739">
    <property type="entry name" value="KOW"/>
    <property type="match status" value="1"/>
</dbReference>
<dbReference type="SUPFAM" id="SSF55174">
    <property type="entry name" value="Alpha-L RNA-binding motif"/>
    <property type="match status" value="1"/>
</dbReference>
<dbReference type="PROSITE" id="PS00528">
    <property type="entry name" value="RIBOSOMAL_S4E"/>
    <property type="match status" value="1"/>
</dbReference>
<dbReference type="PROSITE" id="PS50889">
    <property type="entry name" value="S4"/>
    <property type="match status" value="1"/>
</dbReference>
<sequence length="234" mass="25794">MCGNHLKRVAAPRTWPITRKTSKWVAKPMPGAHSEERGMPLVVVLRDLLKVADNTSEIKKILHEGKVLVDGKVRKDYRYTVGMFDTISIPAINANYRVVIGMDGKFHLVPVTDASAKICKIVNKTALRGGKIQLNLHDGTTMIASNDYKTKDSVILKMPERKIDQHFTYAVGSLVMVTEGKHSGEIGKVKEIKVVRSSAPNTVVITTPEGDFETIEQYVFVIGKDSPAVQGVKA</sequence>
<proteinExistence type="inferred from homology"/>
<comment type="similarity">
    <text evidence="1">Belongs to the eukaryotic ribosomal protein eS4 family.</text>
</comment>